<proteinExistence type="inferred from homology"/>
<dbReference type="EC" id="2.7.1.23" evidence="1"/>
<dbReference type="EMBL" id="AE015927">
    <property type="protein sequence ID" value="AAO36120.1"/>
    <property type="molecule type" value="Genomic_DNA"/>
</dbReference>
<dbReference type="RefSeq" id="WP_011099780.1">
    <property type="nucleotide sequence ID" value="NC_004557.1"/>
</dbReference>
<dbReference type="SMR" id="Q894H2"/>
<dbReference type="STRING" id="212717.CTC_01573"/>
<dbReference type="GeneID" id="24252712"/>
<dbReference type="KEGG" id="ctc:CTC_01573"/>
<dbReference type="HOGENOM" id="CLU_008831_0_1_9"/>
<dbReference type="OrthoDB" id="9774737at2"/>
<dbReference type="Proteomes" id="UP000001412">
    <property type="component" value="Chromosome"/>
</dbReference>
<dbReference type="GO" id="GO:0005737">
    <property type="term" value="C:cytoplasm"/>
    <property type="evidence" value="ECO:0007669"/>
    <property type="project" value="UniProtKB-SubCell"/>
</dbReference>
<dbReference type="GO" id="GO:0005524">
    <property type="term" value="F:ATP binding"/>
    <property type="evidence" value="ECO:0007669"/>
    <property type="project" value="UniProtKB-KW"/>
</dbReference>
<dbReference type="GO" id="GO:0046872">
    <property type="term" value="F:metal ion binding"/>
    <property type="evidence" value="ECO:0007669"/>
    <property type="project" value="UniProtKB-UniRule"/>
</dbReference>
<dbReference type="GO" id="GO:0051287">
    <property type="term" value="F:NAD binding"/>
    <property type="evidence" value="ECO:0007669"/>
    <property type="project" value="UniProtKB-ARBA"/>
</dbReference>
<dbReference type="GO" id="GO:0003951">
    <property type="term" value="F:NAD+ kinase activity"/>
    <property type="evidence" value="ECO:0007669"/>
    <property type="project" value="UniProtKB-UniRule"/>
</dbReference>
<dbReference type="GO" id="GO:0019674">
    <property type="term" value="P:NAD metabolic process"/>
    <property type="evidence" value="ECO:0007669"/>
    <property type="project" value="InterPro"/>
</dbReference>
<dbReference type="GO" id="GO:0006741">
    <property type="term" value="P:NADP biosynthetic process"/>
    <property type="evidence" value="ECO:0007669"/>
    <property type="project" value="UniProtKB-UniRule"/>
</dbReference>
<dbReference type="Gene3D" id="3.40.50.10330">
    <property type="entry name" value="Probable inorganic polyphosphate/atp-NAD kinase, domain 1"/>
    <property type="match status" value="1"/>
</dbReference>
<dbReference type="Gene3D" id="2.60.200.30">
    <property type="entry name" value="Probable inorganic polyphosphate/atp-NAD kinase, domain 2"/>
    <property type="match status" value="1"/>
</dbReference>
<dbReference type="HAMAP" id="MF_00361">
    <property type="entry name" value="NAD_kinase"/>
    <property type="match status" value="1"/>
</dbReference>
<dbReference type="InterPro" id="IPR017438">
    <property type="entry name" value="ATP-NAD_kinase_N"/>
</dbReference>
<dbReference type="InterPro" id="IPR017437">
    <property type="entry name" value="ATP-NAD_kinase_PpnK-typ_C"/>
</dbReference>
<dbReference type="InterPro" id="IPR016064">
    <property type="entry name" value="NAD/diacylglycerol_kinase_sf"/>
</dbReference>
<dbReference type="InterPro" id="IPR002504">
    <property type="entry name" value="NADK"/>
</dbReference>
<dbReference type="PANTHER" id="PTHR20275">
    <property type="entry name" value="NAD KINASE"/>
    <property type="match status" value="1"/>
</dbReference>
<dbReference type="PANTHER" id="PTHR20275:SF0">
    <property type="entry name" value="NAD KINASE"/>
    <property type="match status" value="1"/>
</dbReference>
<dbReference type="Pfam" id="PF01513">
    <property type="entry name" value="NAD_kinase"/>
    <property type="match status" value="1"/>
</dbReference>
<dbReference type="Pfam" id="PF20143">
    <property type="entry name" value="NAD_kinase_C"/>
    <property type="match status" value="1"/>
</dbReference>
<dbReference type="SUPFAM" id="SSF111331">
    <property type="entry name" value="NAD kinase/diacylglycerol kinase-like"/>
    <property type="match status" value="1"/>
</dbReference>
<name>NADK_CLOTE</name>
<gene>
    <name evidence="1" type="primary">nadK</name>
    <name type="ordered locus">CTC_01573</name>
</gene>
<organism>
    <name type="scientific">Clostridium tetani (strain Massachusetts / E88)</name>
    <dbReference type="NCBI Taxonomy" id="212717"/>
    <lineage>
        <taxon>Bacteria</taxon>
        <taxon>Bacillati</taxon>
        <taxon>Bacillota</taxon>
        <taxon>Clostridia</taxon>
        <taxon>Eubacteriales</taxon>
        <taxon>Clostridiaceae</taxon>
        <taxon>Clostridium</taxon>
    </lineage>
</organism>
<evidence type="ECO:0000255" key="1">
    <source>
        <dbReference type="HAMAP-Rule" id="MF_00361"/>
    </source>
</evidence>
<sequence length="274" mass="30725">MRYIGINVNTGKDVEGRLLKKIVEAIEDNCKDVEVKIYKDSIGLEKKETENLEVVIVLGGDGTILKASKYLAKYNVPILGINIGNLGFLTETESSNFIFSIRNYFKGKYYIEERNMVQCTTEYKGIKKEFHGLNDIVVTKGDVGKTAKYDLYIDGNFYTKLSSDGVIVSTSTGSTAYSLSAGGPIIYPTLDALCLTPICGHSLRIRSIVLNHKSIIKIISQSENVILTVDGEEINFLENVKEFLITSSPYKCKLIKLEGEHRDYYSILRNKLYL</sequence>
<comment type="function">
    <text evidence="1">Involved in the regulation of the intracellular balance of NAD and NADP, and is a key enzyme in the biosynthesis of NADP. Catalyzes specifically the phosphorylation on 2'-hydroxyl of the adenosine moiety of NAD to yield NADP.</text>
</comment>
<comment type="catalytic activity">
    <reaction evidence="1">
        <text>NAD(+) + ATP = ADP + NADP(+) + H(+)</text>
        <dbReference type="Rhea" id="RHEA:18629"/>
        <dbReference type="ChEBI" id="CHEBI:15378"/>
        <dbReference type="ChEBI" id="CHEBI:30616"/>
        <dbReference type="ChEBI" id="CHEBI:57540"/>
        <dbReference type="ChEBI" id="CHEBI:58349"/>
        <dbReference type="ChEBI" id="CHEBI:456216"/>
        <dbReference type="EC" id="2.7.1.23"/>
    </reaction>
</comment>
<comment type="cofactor">
    <cofactor evidence="1">
        <name>a divalent metal cation</name>
        <dbReference type="ChEBI" id="CHEBI:60240"/>
    </cofactor>
</comment>
<comment type="subcellular location">
    <subcellularLocation>
        <location evidence="1">Cytoplasm</location>
    </subcellularLocation>
</comment>
<comment type="similarity">
    <text evidence="1">Belongs to the NAD kinase family.</text>
</comment>
<protein>
    <recommendedName>
        <fullName evidence="1">NAD kinase</fullName>
        <ecNumber evidence="1">2.7.1.23</ecNumber>
    </recommendedName>
    <alternativeName>
        <fullName evidence="1">ATP-dependent NAD kinase</fullName>
    </alternativeName>
</protein>
<feature type="chain" id="PRO_0000120613" description="NAD kinase">
    <location>
        <begin position="1"/>
        <end position="274"/>
    </location>
</feature>
<feature type="active site" description="Proton acceptor" evidence="1">
    <location>
        <position position="61"/>
    </location>
</feature>
<feature type="binding site" evidence="1">
    <location>
        <begin position="61"/>
        <end position="62"/>
    </location>
    <ligand>
        <name>NAD(+)</name>
        <dbReference type="ChEBI" id="CHEBI:57540"/>
    </ligand>
</feature>
<feature type="binding site" evidence="1">
    <location>
        <position position="66"/>
    </location>
    <ligand>
        <name>NAD(+)</name>
        <dbReference type="ChEBI" id="CHEBI:57540"/>
    </ligand>
</feature>
<feature type="binding site" evidence="1">
    <location>
        <begin position="134"/>
        <end position="135"/>
    </location>
    <ligand>
        <name>NAD(+)</name>
        <dbReference type="ChEBI" id="CHEBI:57540"/>
    </ligand>
</feature>
<feature type="binding site" evidence="1">
    <location>
        <position position="145"/>
    </location>
    <ligand>
        <name>NAD(+)</name>
        <dbReference type="ChEBI" id="CHEBI:57540"/>
    </ligand>
</feature>
<feature type="binding site" evidence="1">
    <location>
        <position position="164"/>
    </location>
    <ligand>
        <name>NAD(+)</name>
        <dbReference type="ChEBI" id="CHEBI:57540"/>
    </ligand>
</feature>
<feature type="binding site" evidence="1">
    <location>
        <begin position="175"/>
        <end position="180"/>
    </location>
    <ligand>
        <name>NAD(+)</name>
        <dbReference type="ChEBI" id="CHEBI:57540"/>
    </ligand>
</feature>
<reference key="1">
    <citation type="journal article" date="2003" name="Proc. Natl. Acad. Sci. U.S.A.">
        <title>The genome sequence of Clostridium tetani, the causative agent of tetanus disease.</title>
        <authorList>
            <person name="Brueggemann H."/>
            <person name="Baeumer S."/>
            <person name="Fricke W.F."/>
            <person name="Wiezer A."/>
            <person name="Liesegang H."/>
            <person name="Decker I."/>
            <person name="Herzberg C."/>
            <person name="Martinez-Arias R."/>
            <person name="Merkl R."/>
            <person name="Henne A."/>
            <person name="Gottschalk G."/>
        </authorList>
    </citation>
    <scope>NUCLEOTIDE SEQUENCE [LARGE SCALE GENOMIC DNA]</scope>
    <source>
        <strain>Massachusetts / E88</strain>
    </source>
</reference>
<accession>Q894H2</accession>
<keyword id="KW-0067">ATP-binding</keyword>
<keyword id="KW-0963">Cytoplasm</keyword>
<keyword id="KW-0418">Kinase</keyword>
<keyword id="KW-0520">NAD</keyword>
<keyword id="KW-0521">NADP</keyword>
<keyword id="KW-0547">Nucleotide-binding</keyword>
<keyword id="KW-1185">Reference proteome</keyword>
<keyword id="KW-0808">Transferase</keyword>